<evidence type="ECO:0000255" key="1">
    <source>
        <dbReference type="HAMAP-Rule" id="MF_01636"/>
    </source>
</evidence>
<gene>
    <name evidence="1" type="primary">ubiD</name>
    <name type="ordered locus">lpl2862</name>
</gene>
<feature type="chain" id="PRO_0000267669" description="3-octaprenyl-4-hydroxybenzoate carboxy-lyase">
    <location>
        <begin position="1"/>
        <end position="488"/>
    </location>
</feature>
<feature type="active site" description="Proton donor" evidence="1">
    <location>
        <position position="287"/>
    </location>
</feature>
<feature type="binding site" evidence="1">
    <location>
        <position position="172"/>
    </location>
    <ligand>
        <name>Mn(2+)</name>
        <dbReference type="ChEBI" id="CHEBI:29035"/>
    </ligand>
</feature>
<feature type="binding site" evidence="1">
    <location>
        <begin position="175"/>
        <end position="177"/>
    </location>
    <ligand>
        <name>prenylated FMN</name>
        <dbReference type="ChEBI" id="CHEBI:87746"/>
    </ligand>
</feature>
<feature type="binding site" evidence="1">
    <location>
        <begin position="189"/>
        <end position="191"/>
    </location>
    <ligand>
        <name>prenylated FMN</name>
        <dbReference type="ChEBI" id="CHEBI:87746"/>
    </ligand>
</feature>
<feature type="binding site" evidence="1">
    <location>
        <begin position="194"/>
        <end position="195"/>
    </location>
    <ligand>
        <name>prenylated FMN</name>
        <dbReference type="ChEBI" id="CHEBI:87746"/>
    </ligand>
</feature>
<feature type="binding site" evidence="1">
    <location>
        <position position="238"/>
    </location>
    <ligand>
        <name>Mn(2+)</name>
        <dbReference type="ChEBI" id="CHEBI:29035"/>
    </ligand>
</feature>
<protein>
    <recommendedName>
        <fullName evidence="1">3-octaprenyl-4-hydroxybenzoate carboxy-lyase</fullName>
        <ecNumber evidence="1">4.1.1.98</ecNumber>
    </recommendedName>
    <alternativeName>
        <fullName evidence="1">Polyprenyl p-hydroxybenzoate decarboxylase</fullName>
    </alternativeName>
</protein>
<sequence length="488" mass="55027">MKYSDLRDFIAQLESRELLKRIDYPVSPHLEMTVVSDKVLRSGGPALLFTNTPNYDMPVLTNLFGTVERVALGMGEESIVALREIGKLLAALKEPDPPKGFKDAFSKLPLLKQALNMAPKYVSGAECQTHVWEKDEVDLTLLPIQTCWPGDVAPLITWGLVTTRGPHQSRENMGIYRQQLLSKNKLIMRWLSHRGGALDYQAWQQEYPKERFPVAVTLGADPATILAAVTPVPDTLSEYAFAGLLRGQRTRLTRCIGNDLHVPASAEIVLEGYLEPGNEAPEGPYGDHTGYYNEVQSFPVFTVERITHRDKPIYHSTYTGRPPDEPAILGVALNEVFIPLLQKQFPEIVDFYLPPEGCSYRLAVVTIKKQYPGHAKRIMMAVWSFLRQFMYTKFVIVCDDDVDARNWQDVIWAMTTRMDPSRDTVMVENTPIDYLDFASPVSGLGSKMGMDATSKWPGETQREWGKPITMDEDVLNRVNGYWSLLGLK</sequence>
<dbReference type="EC" id="4.1.1.98" evidence="1"/>
<dbReference type="EMBL" id="CR628337">
    <property type="protein sequence ID" value="CAH17106.1"/>
    <property type="molecule type" value="Genomic_DNA"/>
</dbReference>
<dbReference type="RefSeq" id="WP_011216777.1">
    <property type="nucleotide sequence ID" value="NC_006369.1"/>
</dbReference>
<dbReference type="SMR" id="Q5WSL6"/>
<dbReference type="KEGG" id="lpf:lpl2862"/>
<dbReference type="LegioList" id="lpl2862"/>
<dbReference type="HOGENOM" id="CLU_023348_4_1_6"/>
<dbReference type="UniPathway" id="UPA00232"/>
<dbReference type="Proteomes" id="UP000002517">
    <property type="component" value="Chromosome"/>
</dbReference>
<dbReference type="GO" id="GO:0005829">
    <property type="term" value="C:cytosol"/>
    <property type="evidence" value="ECO:0007669"/>
    <property type="project" value="TreeGrafter"/>
</dbReference>
<dbReference type="GO" id="GO:0005886">
    <property type="term" value="C:plasma membrane"/>
    <property type="evidence" value="ECO:0007669"/>
    <property type="project" value="UniProtKB-SubCell"/>
</dbReference>
<dbReference type="GO" id="GO:0008694">
    <property type="term" value="F:3-octaprenyl-4-hydroxybenzoate carboxy-lyase activity"/>
    <property type="evidence" value="ECO:0007669"/>
    <property type="project" value="UniProtKB-UniRule"/>
</dbReference>
<dbReference type="GO" id="GO:0046872">
    <property type="term" value="F:metal ion binding"/>
    <property type="evidence" value="ECO:0007669"/>
    <property type="project" value="UniProtKB-KW"/>
</dbReference>
<dbReference type="GO" id="GO:0006744">
    <property type="term" value="P:ubiquinone biosynthetic process"/>
    <property type="evidence" value="ECO:0007669"/>
    <property type="project" value="UniProtKB-UniRule"/>
</dbReference>
<dbReference type="FunFam" id="3.40.1670.10:FF:000001">
    <property type="entry name" value="3-octaprenyl-4-hydroxybenzoate carboxy-lyase"/>
    <property type="match status" value="1"/>
</dbReference>
<dbReference type="Gene3D" id="1.20.5.570">
    <property type="entry name" value="Single helix bin"/>
    <property type="match status" value="1"/>
</dbReference>
<dbReference type="Gene3D" id="3.40.1670.10">
    <property type="entry name" value="UbiD C-terminal domain-like"/>
    <property type="match status" value="1"/>
</dbReference>
<dbReference type="HAMAP" id="MF_01636">
    <property type="entry name" value="UbiD"/>
    <property type="match status" value="1"/>
</dbReference>
<dbReference type="InterPro" id="IPR002830">
    <property type="entry name" value="UbiD"/>
</dbReference>
<dbReference type="InterPro" id="IPR049381">
    <property type="entry name" value="UbiD-like_C"/>
</dbReference>
<dbReference type="InterPro" id="IPR049383">
    <property type="entry name" value="UbiD-like_N"/>
</dbReference>
<dbReference type="InterPro" id="IPR023677">
    <property type="entry name" value="UbiD_bacteria"/>
</dbReference>
<dbReference type="InterPro" id="IPR048304">
    <property type="entry name" value="UbiD_Rift_dom"/>
</dbReference>
<dbReference type="NCBIfam" id="NF008175">
    <property type="entry name" value="PRK10922.1"/>
    <property type="match status" value="1"/>
</dbReference>
<dbReference type="NCBIfam" id="TIGR00148">
    <property type="entry name" value="UbiD family decarboxylase"/>
    <property type="match status" value="1"/>
</dbReference>
<dbReference type="PANTHER" id="PTHR30108">
    <property type="entry name" value="3-OCTAPRENYL-4-HYDROXYBENZOATE CARBOXY-LYASE-RELATED"/>
    <property type="match status" value="1"/>
</dbReference>
<dbReference type="PANTHER" id="PTHR30108:SF17">
    <property type="entry name" value="FERULIC ACID DECARBOXYLASE 1"/>
    <property type="match status" value="1"/>
</dbReference>
<dbReference type="Pfam" id="PF01977">
    <property type="entry name" value="UbiD"/>
    <property type="match status" value="1"/>
</dbReference>
<dbReference type="Pfam" id="PF20696">
    <property type="entry name" value="UbiD_C"/>
    <property type="match status" value="1"/>
</dbReference>
<dbReference type="Pfam" id="PF20695">
    <property type="entry name" value="UbiD_N"/>
    <property type="match status" value="1"/>
</dbReference>
<dbReference type="SUPFAM" id="SSF50475">
    <property type="entry name" value="FMN-binding split barrel"/>
    <property type="match status" value="1"/>
</dbReference>
<dbReference type="SUPFAM" id="SSF143968">
    <property type="entry name" value="UbiD C-terminal domain-like"/>
    <property type="match status" value="1"/>
</dbReference>
<comment type="function">
    <text evidence="1">Catalyzes the decarboxylation of 3-octaprenyl-4-hydroxy benzoate to 2-octaprenylphenol, an intermediate step in ubiquinone biosynthesis.</text>
</comment>
<comment type="catalytic activity">
    <reaction evidence="1">
        <text>a 4-hydroxy-3-(all-trans-polyprenyl)benzoate + H(+) = a 2-(all-trans-polyprenyl)phenol + CO2</text>
        <dbReference type="Rhea" id="RHEA:41680"/>
        <dbReference type="Rhea" id="RHEA-COMP:9514"/>
        <dbReference type="Rhea" id="RHEA-COMP:9516"/>
        <dbReference type="ChEBI" id="CHEBI:1269"/>
        <dbReference type="ChEBI" id="CHEBI:15378"/>
        <dbReference type="ChEBI" id="CHEBI:16526"/>
        <dbReference type="ChEBI" id="CHEBI:78396"/>
        <dbReference type="EC" id="4.1.1.98"/>
    </reaction>
</comment>
<comment type="cofactor">
    <cofactor evidence="1">
        <name>prenylated FMN</name>
        <dbReference type="ChEBI" id="CHEBI:87746"/>
    </cofactor>
    <text evidence="1">Binds 1 prenylated FMN per subunit.</text>
</comment>
<comment type="cofactor">
    <cofactor evidence="1">
        <name>Mn(2+)</name>
        <dbReference type="ChEBI" id="CHEBI:29035"/>
    </cofactor>
</comment>
<comment type="pathway">
    <text evidence="1">Cofactor biosynthesis; ubiquinone biosynthesis.</text>
</comment>
<comment type="subunit">
    <text evidence="1">Homohexamer.</text>
</comment>
<comment type="subcellular location">
    <subcellularLocation>
        <location evidence="1">Cell membrane</location>
        <topology evidence="1">Peripheral membrane protein</topology>
    </subcellularLocation>
</comment>
<comment type="similarity">
    <text evidence="1">Belongs to the UbiD family.</text>
</comment>
<name>UBID_LEGPL</name>
<reference key="1">
    <citation type="journal article" date="2004" name="Nat. Genet.">
        <title>Evidence in the Legionella pneumophila genome for exploitation of host cell functions and high genome plasticity.</title>
        <authorList>
            <person name="Cazalet C."/>
            <person name="Rusniok C."/>
            <person name="Brueggemann H."/>
            <person name="Zidane N."/>
            <person name="Magnier A."/>
            <person name="Ma L."/>
            <person name="Tichit M."/>
            <person name="Jarraud S."/>
            <person name="Bouchier C."/>
            <person name="Vandenesch F."/>
            <person name="Kunst F."/>
            <person name="Etienne J."/>
            <person name="Glaser P."/>
            <person name="Buchrieser C."/>
        </authorList>
    </citation>
    <scope>NUCLEOTIDE SEQUENCE [LARGE SCALE GENOMIC DNA]</scope>
    <source>
        <strain>Lens</strain>
    </source>
</reference>
<proteinExistence type="inferred from homology"/>
<organism>
    <name type="scientific">Legionella pneumophila (strain Lens)</name>
    <dbReference type="NCBI Taxonomy" id="297245"/>
    <lineage>
        <taxon>Bacteria</taxon>
        <taxon>Pseudomonadati</taxon>
        <taxon>Pseudomonadota</taxon>
        <taxon>Gammaproteobacteria</taxon>
        <taxon>Legionellales</taxon>
        <taxon>Legionellaceae</taxon>
        <taxon>Legionella</taxon>
    </lineage>
</organism>
<keyword id="KW-1003">Cell membrane</keyword>
<keyword id="KW-0210">Decarboxylase</keyword>
<keyword id="KW-0285">Flavoprotein</keyword>
<keyword id="KW-0288">FMN</keyword>
<keyword id="KW-0456">Lyase</keyword>
<keyword id="KW-0464">Manganese</keyword>
<keyword id="KW-0472">Membrane</keyword>
<keyword id="KW-0479">Metal-binding</keyword>
<keyword id="KW-0831">Ubiquinone biosynthesis</keyword>
<accession>Q5WSL6</accession>